<comment type="function">
    <text evidence="2 7 8 9 10 11 12 13 14">Secretory calcium-dependent phospholipase A2 that primarily targets extracellular phospholipids. Hydrolyzes the ester bond of the fatty acyl group attached at sn-2 position of phospholipids (phospholipase A2 activity), preferentially releasing fatty acyl groups with a low degree of unsaturation such as oleoyl (C18:1) and linoleoyl (C18:2) groups (PubMed:14962950). Hydrolyzes low-density lipoprotein (LDL) phospholipids releasing unsaturated fatty acids that drive macrophage polarization toward an M2 phenotype (PubMed:14962950, PubMed:24910243). May act in an autocrine and paracrine manner. Contributes to lipid remodeling of cellular membranes at different subcellular locations and generation of lipid mediators involved in pathogen clearance. Cleaves sn-2 fatty acyl chains of cardiolipin, a major component of the inner membrane of mitochondria and bacterial membranes (By similarity). Promotes phagocytosis of bacteria in macrophages through production of lysophosphatidylethanolamines (By similarity). Displays bactericidal activity against Gram-positive bacteria by directly hydrolyzing the phospholipids of the bacterial membrane (PubMed:11694541, PubMed:16407308). Promotes phagocytosis and killing of ingested fungi likely through controlling phagosome-lysosome fusion and phagosome maturation (PubMed:19342668). Plays a role in biosynthesis of cysteinyl leukotrienes (CysLTs) in myeloid cells (By similarity). In eosinophils, triggers perinuclear arachidonate release and LTC4 synthesis in a PLA2G4A-independent way (By similarity). In neutrophils, amplifies CysLTs biosynthesis initiated by PLA2G4A (By similarity). Promotes immune complex clearance in macrophages via stimulating synthesis of CysLTs, which act through CYSLTR1 to trigger phagocytosis (PubMed:20432503). May regulate antigen processing in antigen-presenting cells (PubMed:20817863). In pulmonary macrophages regulates IL33 production required for activation of group 2 innate lymphoid cells (PubMed:29346348). May play a role in the biosynthesis of N-acyl ethanolamines that regulate energy metabolism. Hydrolyzes N-acyl phosphatidylethanolamines to N-acyl lysophosphatidylethanolamines, which are further cleaved by a lysophospholipase D to release N-acyl ethanolamines (By similarity).</text>
</comment>
<comment type="catalytic activity">
    <reaction evidence="4 5 8">
        <text>a 1,2-diacyl-sn-glycero-3-phosphocholine + H2O = a 1-acyl-sn-glycero-3-phosphocholine + a fatty acid + H(+)</text>
        <dbReference type="Rhea" id="RHEA:15801"/>
        <dbReference type="ChEBI" id="CHEBI:15377"/>
        <dbReference type="ChEBI" id="CHEBI:15378"/>
        <dbReference type="ChEBI" id="CHEBI:28868"/>
        <dbReference type="ChEBI" id="CHEBI:57643"/>
        <dbReference type="ChEBI" id="CHEBI:58168"/>
        <dbReference type="EC" id="3.1.1.4"/>
    </reaction>
</comment>
<comment type="catalytic activity">
    <reaction evidence="8">
        <text>1-hexadecanoyl-2-(9Z-octadecenoyl)-sn-glycero-3-phosphocholine + H2O = 1-hexadecanoyl-sn-glycero-3-phosphocholine + (9Z)-octadecenoate + H(+)</text>
        <dbReference type="Rhea" id="RHEA:38779"/>
        <dbReference type="ChEBI" id="CHEBI:15377"/>
        <dbReference type="ChEBI" id="CHEBI:15378"/>
        <dbReference type="ChEBI" id="CHEBI:30823"/>
        <dbReference type="ChEBI" id="CHEBI:72998"/>
        <dbReference type="ChEBI" id="CHEBI:73001"/>
    </reaction>
    <physiologicalReaction direction="left-to-right" evidence="16">
        <dbReference type="Rhea" id="RHEA:38780"/>
    </physiologicalReaction>
</comment>
<comment type="catalytic activity">
    <reaction evidence="2">
        <text>1-hexadecanoyl-2-(5Z,8Z,11Z,14Z-eicosatetraenoyl)-sn-glycero-3-phosphocholine + H2O = 1-hexadecanoyl-sn-glycero-3-phosphocholine + (5Z,8Z,11Z,14Z)-eicosatetraenoate + H(+)</text>
        <dbReference type="Rhea" id="RHEA:40427"/>
        <dbReference type="ChEBI" id="CHEBI:15377"/>
        <dbReference type="ChEBI" id="CHEBI:15378"/>
        <dbReference type="ChEBI" id="CHEBI:32395"/>
        <dbReference type="ChEBI" id="CHEBI:72998"/>
        <dbReference type="ChEBI" id="CHEBI:73003"/>
    </reaction>
    <physiologicalReaction direction="left-to-right" evidence="2">
        <dbReference type="Rhea" id="RHEA:40428"/>
    </physiologicalReaction>
</comment>
<comment type="catalytic activity">
    <reaction evidence="2">
        <text>1-hexadecanoyl-2-(9Z,12Z-octadecadienoyl)-sn-glycero-3-phosphoethanolamine + H2O = 1-hexadecanoyl-sn-glycero-3-phosphoethanolamine + (9Z,12Z)-octadecadienoate + H(+)</text>
        <dbReference type="Rhea" id="RHEA:40815"/>
        <dbReference type="ChEBI" id="CHEBI:15377"/>
        <dbReference type="ChEBI" id="CHEBI:15378"/>
        <dbReference type="ChEBI" id="CHEBI:30245"/>
        <dbReference type="ChEBI" id="CHEBI:73004"/>
        <dbReference type="ChEBI" id="CHEBI:73008"/>
    </reaction>
    <physiologicalReaction direction="left-to-right" evidence="2">
        <dbReference type="Rhea" id="RHEA:40816"/>
    </physiologicalReaction>
</comment>
<comment type="catalytic activity">
    <reaction evidence="2">
        <text>1-hexadecanoyl-2-(5Z,8Z,11Z,14Z-eicosatetraenoyl)-sn-glycero-3-phosphoethanolamine + H2O = 1-hexadecanoyl-sn-glycero-3-phosphoethanolamine + (5Z,8Z,11Z,14Z)-eicosatetraenoate + H(+)</text>
        <dbReference type="Rhea" id="RHEA:40431"/>
        <dbReference type="ChEBI" id="CHEBI:15377"/>
        <dbReference type="ChEBI" id="CHEBI:15378"/>
        <dbReference type="ChEBI" id="CHEBI:32395"/>
        <dbReference type="ChEBI" id="CHEBI:73004"/>
        <dbReference type="ChEBI" id="CHEBI:73009"/>
    </reaction>
    <physiologicalReaction direction="left-to-right" evidence="2">
        <dbReference type="Rhea" id="RHEA:40432"/>
    </physiologicalReaction>
</comment>
<comment type="catalytic activity">
    <reaction evidence="2">
        <text>1-octadecanoyl-2-(5Z,8Z,11Z,14Z-eicosatetraenoyl)-sn-glycero-3-phospho-(1D-myo-inositol) + H2O = 1-octadecanoyl-sn-glycero-3-phospho-(1D-myo-inositol) + (5Z,8Z,11Z,14Z)-eicosatetraenoate + H(+)</text>
        <dbReference type="Rhea" id="RHEA:41215"/>
        <dbReference type="ChEBI" id="CHEBI:15377"/>
        <dbReference type="ChEBI" id="CHEBI:15378"/>
        <dbReference type="ChEBI" id="CHEBI:32395"/>
        <dbReference type="ChEBI" id="CHEBI:74243"/>
        <dbReference type="ChEBI" id="CHEBI:133606"/>
    </reaction>
    <physiologicalReaction direction="left-to-right" evidence="2">
        <dbReference type="Rhea" id="RHEA:41216"/>
    </physiologicalReaction>
</comment>
<comment type="catalytic activity">
    <reaction evidence="8">
        <text>1-hexadecanoyl-2-(9Z-octadecenoyl)-sn-glycero-3-phosphoglycerol + H2O = 1-hexadecanoyl-sn-glycero-3-phosphoglycerol + (9Z)-octadecenoate + H(+)</text>
        <dbReference type="Rhea" id="RHEA:44524"/>
        <dbReference type="ChEBI" id="CHEBI:15377"/>
        <dbReference type="ChEBI" id="CHEBI:15378"/>
        <dbReference type="ChEBI" id="CHEBI:30823"/>
        <dbReference type="ChEBI" id="CHEBI:84472"/>
        <dbReference type="ChEBI" id="CHEBI:84475"/>
    </reaction>
    <physiologicalReaction direction="left-to-right" evidence="16">
        <dbReference type="Rhea" id="RHEA:44525"/>
    </physiologicalReaction>
</comment>
<comment type="catalytic activity">
    <reaction evidence="2">
        <text>N-hexadecanoyl-1,2-di-(9Z-octadecenoyl)-sn-glycero-3-phosphoethanolamine + H2O = N-hexadecanoyl-1-(9Z-octadecenoyl)-sn-glycero-3-phosphoethanolamine + (9Z)-octadecenoate + H(+)</text>
        <dbReference type="Rhea" id="RHEA:45424"/>
        <dbReference type="ChEBI" id="CHEBI:15377"/>
        <dbReference type="ChEBI" id="CHEBI:15378"/>
        <dbReference type="ChEBI" id="CHEBI:30823"/>
        <dbReference type="ChEBI" id="CHEBI:78097"/>
        <dbReference type="ChEBI" id="CHEBI:85217"/>
    </reaction>
    <physiologicalReaction direction="left-to-right" evidence="2">
        <dbReference type="Rhea" id="RHEA:45425"/>
    </physiologicalReaction>
</comment>
<comment type="catalytic activity">
    <reaction evidence="2">
        <text>1'-[1,2-di-(9Z-octadecenoyl)-sn-glycero-3-phospho]-3'-[1-(9Z-octadecenoyl)-sn-glycero-3-phospho]-glycerol + H2O = 1',3'-bis-[1-(9Z-octadecenoyl)-sn-glycero-3-phospho]-glycerol + (9Z)-octadecenoate + H(+)</text>
        <dbReference type="Rhea" id="RHEA:40467"/>
        <dbReference type="ChEBI" id="CHEBI:15377"/>
        <dbReference type="ChEBI" id="CHEBI:15378"/>
        <dbReference type="ChEBI" id="CHEBI:30823"/>
        <dbReference type="ChEBI" id="CHEBI:77256"/>
        <dbReference type="ChEBI" id="CHEBI:77259"/>
    </reaction>
    <physiologicalReaction direction="left-to-right" evidence="2">
        <dbReference type="Rhea" id="RHEA:40468"/>
    </physiologicalReaction>
</comment>
<comment type="catalytic activity">
    <reaction evidence="2">
        <text>1',3'-bis[1,2-di-(9Z-octadecenoyl)-sn-glycero-3-phospho]-glycerol + H2O = 1'-[1,2-di-(9Z-octadecenoyl)-sn-glycero-3-phospho]-3'-[1-(9Z-octadecenoyl)-sn-glycero-3-phospho]-glycerol + (9Z)-octadecenoate + H(+)</text>
        <dbReference type="Rhea" id="RHEA:40463"/>
        <dbReference type="ChEBI" id="CHEBI:15377"/>
        <dbReference type="ChEBI" id="CHEBI:15378"/>
        <dbReference type="ChEBI" id="CHEBI:30823"/>
        <dbReference type="ChEBI" id="CHEBI:77253"/>
        <dbReference type="ChEBI" id="CHEBI:77259"/>
    </reaction>
    <physiologicalReaction direction="left-to-right" evidence="2">
        <dbReference type="Rhea" id="RHEA:40464"/>
    </physiologicalReaction>
</comment>
<comment type="cofactor">
    <cofactor evidence="1">
        <name>Ca(2+)</name>
        <dbReference type="ChEBI" id="CHEBI:29108"/>
    </cofactor>
    <text evidence="1">Binds 1 Ca(2+) ion per subunit.</text>
</comment>
<comment type="pathway">
    <text evidence="2">Lipid metabolism; phospholipid metabolism.</text>
</comment>
<comment type="pathway">
    <text evidence="2">Lipid metabolism; leukotriene B4 biosynthesis.</text>
</comment>
<comment type="pathway">
    <text evidence="2">Lipid metabolism; leukotriene C4 biosynthesis.</text>
</comment>
<comment type="subcellular location">
    <subcellularLocation>
        <location evidence="6">Secreted</location>
    </subcellularLocation>
    <subcellularLocation>
        <location evidence="6">Cell membrane</location>
    </subcellularLocation>
    <subcellularLocation>
        <location evidence="9">Cytoplasmic vesicle</location>
        <location evidence="9">Phagosome</location>
    </subcellularLocation>
    <subcellularLocation>
        <location evidence="9">Recycling endosome</location>
    </subcellularLocation>
    <subcellularLocation>
        <location evidence="9">Golgi apparatus</location>
        <location evidence="9">cis-Golgi network</location>
    </subcellularLocation>
    <subcellularLocation>
        <location evidence="9">Golgi apparatus</location>
        <location evidence="9">trans-Golgi network</location>
    </subcellularLocation>
</comment>
<comment type="tissue specificity">
    <text evidence="9 13">Expressed in peritoneal macrophages (at protein level) (PubMed:16407308). Expressed in heart, skeletal muscle and white adipose tissue (PubMed:24910243).</text>
</comment>
<comment type="induction">
    <text evidence="13">Up-regulated in white adipocytes upon high-fat diet.</text>
</comment>
<comment type="PTM">
    <text>This enzyme lacks one of the seven disulfide bonds found in similar PA2 proteins.</text>
</comment>
<comment type="disruption phenotype">
    <text evidence="10 11 12 13 14">Mutant mice show increased high-fat diet induced obesity, increased visceral fat depositions and exacerbated INS resistance (PubMed:24910243). In a model of systemic candidiasis, mutant mice are deficient in clearing C.albicans in kidney, liver and spleen, resulting in increased mortality (PubMed:19342668). In K/BxN serum transfer arthritis model, a well-described mouse model of inflammatory arthritis, mutant mice develop severe autoantibody-driven arthritic response characterized by increased leukocytic tissue infiltration, pannus formation and bone and cartilage destruction (PubMed:20432503). In a model of allergic pulmonary inflammation induced by dust mite D.farinae, mutant mice show impaired T helper type 2 immune response associated with markedly decreased granulocyte infiltration in bronchoalveolar fluid and decreased goblet cell metaplasia (PubMed:20817863). In a model of antigen-induced asthma following repetitive A. Alternata inhalation, mutant mice display impaired pulmonary eosinophil infiltration and overall impaired allergen-induced inflammation (PubMed:29346348).</text>
</comment>
<comment type="similarity">
    <text evidence="15">Belongs to the phospholipase A2 family.</text>
</comment>
<evidence type="ECO:0000250" key="1"/>
<evidence type="ECO:0000250" key="2">
    <source>
        <dbReference type="UniProtKB" id="P39877"/>
    </source>
</evidence>
<evidence type="ECO:0000255" key="3"/>
<evidence type="ECO:0000255" key="4">
    <source>
        <dbReference type="PROSITE-ProRule" id="PRU10035"/>
    </source>
</evidence>
<evidence type="ECO:0000255" key="5">
    <source>
        <dbReference type="PROSITE-ProRule" id="PRU10036"/>
    </source>
</evidence>
<evidence type="ECO:0000269" key="6">
    <source>
    </source>
</evidence>
<evidence type="ECO:0000269" key="7">
    <source>
    </source>
</evidence>
<evidence type="ECO:0000269" key="8">
    <source>
    </source>
</evidence>
<evidence type="ECO:0000269" key="9">
    <source>
    </source>
</evidence>
<evidence type="ECO:0000269" key="10">
    <source>
    </source>
</evidence>
<evidence type="ECO:0000269" key="11">
    <source>
    </source>
</evidence>
<evidence type="ECO:0000269" key="12">
    <source>
    </source>
</evidence>
<evidence type="ECO:0000269" key="13">
    <source>
    </source>
</evidence>
<evidence type="ECO:0000269" key="14">
    <source>
    </source>
</evidence>
<evidence type="ECO:0000305" key="15"/>
<evidence type="ECO:0000305" key="16">
    <source>
    </source>
</evidence>
<keyword id="KW-0106">Calcium</keyword>
<keyword id="KW-1003">Cell membrane</keyword>
<keyword id="KW-0968">Cytoplasmic vesicle</keyword>
<keyword id="KW-1015">Disulfide bond</keyword>
<keyword id="KW-0967">Endosome</keyword>
<keyword id="KW-0276">Fatty acid metabolism</keyword>
<keyword id="KW-0333">Golgi apparatus</keyword>
<keyword id="KW-0378">Hydrolase</keyword>
<keyword id="KW-0442">Lipid degradation</keyword>
<keyword id="KW-0443">Lipid metabolism</keyword>
<keyword id="KW-0472">Membrane</keyword>
<keyword id="KW-0479">Metal-binding</keyword>
<keyword id="KW-0581">Phagocytosis</keyword>
<keyword id="KW-0595">Phospholipid degradation</keyword>
<keyword id="KW-1208">Phospholipid metabolism</keyword>
<keyword id="KW-1185">Reference proteome</keyword>
<keyword id="KW-0964">Secreted</keyword>
<keyword id="KW-0732">Signal</keyword>
<sequence>MKGLLTLAWFLACSVPAVPGGLLELKSMIEKVTGKNAFKNYGFYGCYCGWGGRGTPKDGTDWCCQMHDRCYGQLEEKDCAIRTQSYDYRYTNGLVICEHDSFCPMRLCACDRKLVYCLRRNLWTYNPLYQYYPNFLC</sequence>
<organism>
    <name type="scientific">Mus musculus</name>
    <name type="common">Mouse</name>
    <dbReference type="NCBI Taxonomy" id="10090"/>
    <lineage>
        <taxon>Eukaryota</taxon>
        <taxon>Metazoa</taxon>
        <taxon>Chordata</taxon>
        <taxon>Craniata</taxon>
        <taxon>Vertebrata</taxon>
        <taxon>Euteleostomi</taxon>
        <taxon>Mammalia</taxon>
        <taxon>Eutheria</taxon>
        <taxon>Euarchontoglires</taxon>
        <taxon>Glires</taxon>
        <taxon>Rodentia</taxon>
        <taxon>Myomorpha</taxon>
        <taxon>Muroidea</taxon>
        <taxon>Muridae</taxon>
        <taxon>Murinae</taxon>
        <taxon>Mus</taxon>
        <taxon>Mus</taxon>
    </lineage>
</organism>
<dbReference type="EC" id="3.1.1.4" evidence="8"/>
<dbReference type="EMBL" id="U66873">
    <property type="protein sequence ID" value="AAC53038.1"/>
    <property type="molecule type" value="mRNA"/>
</dbReference>
<dbReference type="EMBL" id="AF162713">
    <property type="protein sequence ID" value="AAD45807.1"/>
    <property type="molecule type" value="mRNA"/>
</dbReference>
<dbReference type="CCDS" id="CCDS18834.1"/>
<dbReference type="RefSeq" id="NP_001116426.1">
    <property type="nucleotide sequence ID" value="NM_001122954.1"/>
</dbReference>
<dbReference type="RefSeq" id="NP_035240.3">
    <property type="nucleotide sequence ID" value="NM_011110.4"/>
</dbReference>
<dbReference type="RefSeq" id="XP_006538721.2">
    <property type="nucleotide sequence ID" value="XM_006538658.3"/>
</dbReference>
<dbReference type="RefSeq" id="XP_011248510.1">
    <property type="nucleotide sequence ID" value="XM_011250208.2"/>
</dbReference>
<dbReference type="RefSeq" id="XP_017175532.1">
    <property type="nucleotide sequence ID" value="XM_017320043.1"/>
</dbReference>
<dbReference type="RefSeq" id="XP_017175533.1">
    <property type="nucleotide sequence ID" value="XM_017320044.1"/>
</dbReference>
<dbReference type="SMR" id="P97391"/>
<dbReference type="FunCoup" id="P97391">
    <property type="interactions" value="421"/>
</dbReference>
<dbReference type="STRING" id="10090.ENSMUSP00000099571"/>
<dbReference type="BindingDB" id="P97391"/>
<dbReference type="ChEMBL" id="CHEMBL4167"/>
<dbReference type="jPOST" id="P97391"/>
<dbReference type="PaxDb" id="10090-ENSMUSP00000099569"/>
<dbReference type="ProteomicsDB" id="294318"/>
<dbReference type="DNASU" id="18784"/>
<dbReference type="GeneID" id="18784"/>
<dbReference type="KEGG" id="mmu:18784"/>
<dbReference type="AGR" id="MGI:101899"/>
<dbReference type="CTD" id="5322"/>
<dbReference type="MGI" id="MGI:101899">
    <property type="gene designation" value="Pla2g5"/>
</dbReference>
<dbReference type="eggNOG" id="KOG4087">
    <property type="taxonomic scope" value="Eukaryota"/>
</dbReference>
<dbReference type="InParanoid" id="P97391"/>
<dbReference type="OrthoDB" id="5841574at2759"/>
<dbReference type="PhylomeDB" id="P97391"/>
<dbReference type="Reactome" id="R-MMU-1482788">
    <property type="pathway name" value="Acyl chain remodelling of PC"/>
</dbReference>
<dbReference type="Reactome" id="R-MMU-1482801">
    <property type="pathway name" value="Acyl chain remodelling of PS"/>
</dbReference>
<dbReference type="Reactome" id="R-MMU-1482839">
    <property type="pathway name" value="Acyl chain remodelling of PE"/>
</dbReference>
<dbReference type="Reactome" id="R-MMU-1482922">
    <property type="pathway name" value="Acyl chain remodelling of PI"/>
</dbReference>
<dbReference type="Reactome" id="R-MMU-1482925">
    <property type="pathway name" value="Acyl chain remodelling of PG"/>
</dbReference>
<dbReference type="Reactome" id="R-MMU-1483166">
    <property type="pathway name" value="Synthesis of PA"/>
</dbReference>
<dbReference type="UniPathway" id="UPA00085"/>
<dbReference type="UniPathway" id="UPA00878"/>
<dbReference type="UniPathway" id="UPA00879"/>
<dbReference type="BioGRID-ORCS" id="18784">
    <property type="hits" value="2 hits in 79 CRISPR screens"/>
</dbReference>
<dbReference type="ChiTaRS" id="Pla2g5">
    <property type="organism name" value="mouse"/>
</dbReference>
<dbReference type="PRO" id="PR:P97391"/>
<dbReference type="Proteomes" id="UP000000589">
    <property type="component" value="Unplaced"/>
</dbReference>
<dbReference type="RNAct" id="P97391">
    <property type="molecule type" value="protein"/>
</dbReference>
<dbReference type="GO" id="GO:0009986">
    <property type="term" value="C:cell surface"/>
    <property type="evidence" value="ECO:0000314"/>
    <property type="project" value="MGI"/>
</dbReference>
<dbReference type="GO" id="GO:0032009">
    <property type="term" value="C:early phagosome"/>
    <property type="evidence" value="ECO:0000314"/>
    <property type="project" value="UniProtKB"/>
</dbReference>
<dbReference type="GO" id="GO:0005576">
    <property type="term" value="C:extracellular region"/>
    <property type="evidence" value="ECO:0007669"/>
    <property type="project" value="UniProtKB-SubCell"/>
</dbReference>
<dbReference type="GO" id="GO:0005794">
    <property type="term" value="C:Golgi apparatus"/>
    <property type="evidence" value="ECO:0007669"/>
    <property type="project" value="UniProtKB-SubCell"/>
</dbReference>
<dbReference type="GO" id="GO:0032010">
    <property type="term" value="C:phagolysosome"/>
    <property type="evidence" value="ECO:0000314"/>
    <property type="project" value="UniProtKB"/>
</dbReference>
<dbReference type="GO" id="GO:0005886">
    <property type="term" value="C:plasma membrane"/>
    <property type="evidence" value="ECO:0007669"/>
    <property type="project" value="UniProtKB-SubCell"/>
</dbReference>
<dbReference type="GO" id="GO:0055037">
    <property type="term" value="C:recycling endosome"/>
    <property type="evidence" value="ECO:0007669"/>
    <property type="project" value="UniProtKB-SubCell"/>
</dbReference>
<dbReference type="GO" id="GO:0005509">
    <property type="term" value="F:calcium ion binding"/>
    <property type="evidence" value="ECO:0007669"/>
    <property type="project" value="InterPro"/>
</dbReference>
<dbReference type="GO" id="GO:0047499">
    <property type="term" value="F:calcium-independent phospholipase A2 activity"/>
    <property type="evidence" value="ECO:0000250"/>
    <property type="project" value="UniProtKB"/>
</dbReference>
<dbReference type="GO" id="GO:0004623">
    <property type="term" value="F:phospholipase A2 activity"/>
    <property type="evidence" value="ECO:0000314"/>
    <property type="project" value="UniProtKB"/>
</dbReference>
<dbReference type="GO" id="GO:0005102">
    <property type="term" value="F:signaling receptor binding"/>
    <property type="evidence" value="ECO:0000353"/>
    <property type="project" value="UniProtKB"/>
</dbReference>
<dbReference type="GO" id="GO:0050482">
    <property type="term" value="P:arachidonate secretion"/>
    <property type="evidence" value="ECO:0000314"/>
    <property type="project" value="UniProtKB"/>
</dbReference>
<dbReference type="GO" id="GO:0006631">
    <property type="term" value="P:fatty acid metabolic process"/>
    <property type="evidence" value="ECO:0007669"/>
    <property type="project" value="UniProtKB-KW"/>
</dbReference>
<dbReference type="GO" id="GO:0019370">
    <property type="term" value="P:leukotriene biosynthetic process"/>
    <property type="evidence" value="ECO:0000250"/>
    <property type="project" value="UniProtKB"/>
</dbReference>
<dbReference type="GO" id="GO:0034374">
    <property type="term" value="P:low-density lipoprotein particle remodeling"/>
    <property type="evidence" value="ECO:0000314"/>
    <property type="project" value="UniProtKB"/>
</dbReference>
<dbReference type="GO" id="GO:0050728">
    <property type="term" value="P:negative regulation of inflammatory response"/>
    <property type="evidence" value="ECO:0000315"/>
    <property type="project" value="MGI"/>
</dbReference>
<dbReference type="GO" id="GO:0090385">
    <property type="term" value="P:phagosome-lysosome fusion"/>
    <property type="evidence" value="ECO:0000315"/>
    <property type="project" value="UniProtKB"/>
</dbReference>
<dbReference type="GO" id="GO:0034638">
    <property type="term" value="P:phosphatidylcholine catabolic process"/>
    <property type="evidence" value="ECO:0000250"/>
    <property type="project" value="UniProtKB"/>
</dbReference>
<dbReference type="GO" id="GO:0006644">
    <property type="term" value="P:phospholipid metabolic process"/>
    <property type="evidence" value="ECO:0000314"/>
    <property type="project" value="UniProtKB"/>
</dbReference>
<dbReference type="GO" id="GO:1905036">
    <property type="term" value="P:positive regulation of antifungal innate immune response"/>
    <property type="evidence" value="ECO:0000315"/>
    <property type="project" value="UniProtKB"/>
</dbReference>
<dbReference type="GO" id="GO:0090265">
    <property type="term" value="P:positive regulation of immune complex clearance by monocytes and macrophages"/>
    <property type="evidence" value="ECO:0000315"/>
    <property type="project" value="UniProtKB"/>
</dbReference>
<dbReference type="GO" id="GO:0010744">
    <property type="term" value="P:positive regulation of macrophage derived foam cell differentiation"/>
    <property type="evidence" value="ECO:0000314"/>
    <property type="project" value="UniProtKB"/>
</dbReference>
<dbReference type="GO" id="GO:1903028">
    <property type="term" value="P:positive regulation of opsonization"/>
    <property type="evidence" value="ECO:0000315"/>
    <property type="project" value="UniProtKB"/>
</dbReference>
<dbReference type="GO" id="GO:0050766">
    <property type="term" value="P:positive regulation of phagocytosis"/>
    <property type="evidence" value="ECO:0000315"/>
    <property type="project" value="UniProtKB"/>
</dbReference>
<dbReference type="GO" id="GO:1905164">
    <property type="term" value="P:positive regulation of phagosome maturation"/>
    <property type="evidence" value="ECO:0000315"/>
    <property type="project" value="UniProtKB"/>
</dbReference>
<dbReference type="GO" id="GO:0043030">
    <property type="term" value="P:regulation of macrophage activation"/>
    <property type="evidence" value="ECO:0000315"/>
    <property type="project" value="MGI"/>
</dbReference>
<dbReference type="CDD" id="cd00125">
    <property type="entry name" value="PLA2c"/>
    <property type="match status" value="1"/>
</dbReference>
<dbReference type="FunFam" id="1.20.90.10:FF:000001">
    <property type="entry name" value="Basic phospholipase A2 homolog"/>
    <property type="match status" value="1"/>
</dbReference>
<dbReference type="Gene3D" id="1.20.90.10">
    <property type="entry name" value="Phospholipase A2 domain"/>
    <property type="match status" value="1"/>
</dbReference>
<dbReference type="InterPro" id="IPR001211">
    <property type="entry name" value="PLipase_A2"/>
</dbReference>
<dbReference type="InterPro" id="IPR033112">
    <property type="entry name" value="PLipase_A2_Asp_AS"/>
</dbReference>
<dbReference type="InterPro" id="IPR016090">
    <property type="entry name" value="PLipase_A2_dom"/>
</dbReference>
<dbReference type="InterPro" id="IPR036444">
    <property type="entry name" value="PLipase_A2_dom_sf"/>
</dbReference>
<dbReference type="InterPro" id="IPR033113">
    <property type="entry name" value="PLipase_A2_His_AS"/>
</dbReference>
<dbReference type="PANTHER" id="PTHR11716">
    <property type="entry name" value="PHOSPHOLIPASE A2 FAMILY MEMBER"/>
    <property type="match status" value="1"/>
</dbReference>
<dbReference type="PANTHER" id="PTHR11716:SF10">
    <property type="entry name" value="PHOSPHOLIPASE A2 GROUP V"/>
    <property type="match status" value="1"/>
</dbReference>
<dbReference type="Pfam" id="PF00068">
    <property type="entry name" value="Phospholip_A2_1"/>
    <property type="match status" value="1"/>
</dbReference>
<dbReference type="PRINTS" id="PR00389">
    <property type="entry name" value="PHPHLIPASEA2"/>
</dbReference>
<dbReference type="SMART" id="SM00085">
    <property type="entry name" value="PA2c"/>
    <property type="match status" value="1"/>
</dbReference>
<dbReference type="SUPFAM" id="SSF48619">
    <property type="entry name" value="Phospholipase A2, PLA2"/>
    <property type="match status" value="1"/>
</dbReference>
<dbReference type="PROSITE" id="PS00119">
    <property type="entry name" value="PA2_ASP"/>
    <property type="match status" value="1"/>
</dbReference>
<dbReference type="PROSITE" id="PS00118">
    <property type="entry name" value="PA2_HIS"/>
    <property type="match status" value="1"/>
</dbReference>
<gene>
    <name type="primary">Pla2g5</name>
</gene>
<accession>P97391</accession>
<accession>Q9QZU6</accession>
<name>PA2G5_MOUSE</name>
<reference key="1">
    <citation type="journal article" date="1996" name="Genomics">
        <title>Low-molecular-weight, calcium-dependent phospholipase A2 genes are linked and map to homologous chromosome regions in mouse and human.</title>
        <authorList>
            <person name="Tischfield J.A."/>
            <person name="Xia Y.R."/>
            <person name="Shih D.M."/>
            <person name="Klisak I."/>
            <person name="Chen J."/>
            <person name="Engle S.J."/>
            <person name="Siakotos A.N."/>
            <person name="Winstead M.V."/>
            <person name="Seilhamer J.J."/>
            <person name="Allamand V."/>
            <person name="Gyapay G."/>
            <person name="Lusis A."/>
        </authorList>
    </citation>
    <scope>NUCLEOTIDE SEQUENCE [MRNA]</scope>
    <source>
        <strain>129</strain>
    </source>
</reference>
<reference key="2">
    <citation type="journal article" date="1999" name="J. Biol. Chem.">
        <title>Low molecular weight group IIA and group V phospholipase A(2) enzymes have different intracellular locations in mouse bone marrow-derived mast cells.</title>
        <authorList>
            <person name="Bingham C.O. III"/>
            <person name="Fijneman R.J.A."/>
            <person name="Friend D.S."/>
            <person name="Goddeau R.P."/>
            <person name="Rogers R.A."/>
            <person name="Austen K.F."/>
            <person name="Arm J.P."/>
        </authorList>
    </citation>
    <scope>NUCLEOTIDE SEQUENCE [MRNA]</scope>
    <scope>SUBCELLULAR LOCATION</scope>
    <source>
        <strain>BALB/cJ</strain>
    </source>
</reference>
<reference key="3">
    <citation type="journal article" date="2002" name="J. Biol. Chem.">
        <title>Bactericidal properties of human and murine groups I, II, V, X, and XII secreted phospholipases A(2).</title>
        <authorList>
            <person name="Koduri R.S."/>
            <person name="Groenroos J.O."/>
            <person name="Laine V.J."/>
            <person name="Le Calvez C."/>
            <person name="Lambeau G."/>
            <person name="Nevalainen T.J."/>
            <person name="Gelb M.H."/>
        </authorList>
    </citation>
    <scope>FUNCTION</scope>
</reference>
<reference key="4">
    <citation type="journal article" date="2004" name="Arterioscler. Thromb. Vasc. Biol.">
        <title>Group V sPLA2 hydrolysis of low-density lipoprotein results in spontaneous particle aggregation and promotes macrophage foam cell formation.</title>
        <authorList>
            <person name="Wooton-Kee C.R."/>
            <person name="Boyanovsky B.B."/>
            <person name="Nasser M.S."/>
            <person name="de Villiers W.J."/>
            <person name="Webb N.R."/>
        </authorList>
    </citation>
    <scope>FUNCTION</scope>
    <scope>CATALYTIC ACTIVITY</scope>
</reference>
<reference key="5">
    <citation type="journal article" date="2006" name="J. Biol. Chem.">
        <title>Group V secretory phospholipase A2 translocates to the phagosome after zymosan stimulation of mouse peritoneal macrophages and regulates phagocytosis.</title>
        <authorList>
            <person name="Balestrieri B."/>
            <person name="Hsu V.W."/>
            <person name="Gilbert H."/>
            <person name="Leslie C.C."/>
            <person name="Han W.K."/>
            <person name="Bonventre J.V."/>
            <person name="Arm J.P."/>
        </authorList>
    </citation>
    <scope>FUNCTION</scope>
    <scope>SUBCELLULAR LOCATION</scope>
    <scope>TISSUE SPECIFICITY</scope>
</reference>
<reference key="6">
    <citation type="journal article" date="2009" name="J. Immunol.">
        <title>Group V secretory phospholipase A2 modulates phagosome maturation and regulates the innate immune response against Candida albicans.</title>
        <authorList>
            <person name="Balestrieri B."/>
            <person name="Maekawa A."/>
            <person name="Xing W."/>
            <person name="Gelb M.H."/>
            <person name="Katz H.R."/>
            <person name="Arm J.P."/>
        </authorList>
    </citation>
    <scope>FUNCTION</scope>
    <scope>DISRUPTION PHENOTYPE</scope>
</reference>
<reference key="7">
    <citation type="journal article" date="2010" name="EMBO Mol. Med.">
        <title>A novel anti-inflammatory role for secretory phospholipase A2 in immune complex-mediated arthritis.</title>
        <authorList>
            <person name="Boilard E."/>
            <person name="Lai Y."/>
            <person name="Larabee K."/>
            <person name="Balestrieri B."/>
            <person name="Ghomashchi F."/>
            <person name="Fujioka D."/>
            <person name="Gobezie R."/>
            <person name="Coblyn J.S."/>
            <person name="Weinblatt M.E."/>
            <person name="Massarotti E.M."/>
            <person name="Thornhill T.S."/>
            <person name="Divangahi M."/>
            <person name="Remold H."/>
            <person name="Lambeau G."/>
            <person name="Gelb M.H."/>
            <person name="Arm J.P."/>
            <person name="Lee D.M."/>
        </authorList>
    </citation>
    <scope>FUNCTION</scope>
    <scope>DISRUPTION PHENOTYPE</scope>
    <scope>MUTAGENESIS OF HIS-67</scope>
</reference>
<reference key="8">
    <citation type="journal article" date="2010" name="J. Immunol.">
        <title>Group V secretory phospholipase A2 reveals its role in house dust mite-induced allergic pulmonary inflammation by regulation of dendritic cell function.</title>
        <authorList>
            <person name="Giannattasio G."/>
            <person name="Fujioka D."/>
            <person name="Xing W."/>
            <person name="Katz H.R."/>
            <person name="Boyce J.A."/>
            <person name="Balestrieri B."/>
        </authorList>
    </citation>
    <scope>FUNCTION</scope>
    <scope>DISRUPTION PHENOTYPE</scope>
</reference>
<reference key="9">
    <citation type="journal article" date="2014" name="Cell Metab.">
        <title>The adipocyte-inducible secreted phospholipases PLA2G5 and PLA2G2E play distinct roles in obesity.</title>
        <authorList>
            <person name="Sato H."/>
            <person name="Taketomi Y."/>
            <person name="Ushida A."/>
            <person name="Isogai Y."/>
            <person name="Kojima T."/>
            <person name="Hirabayashi T."/>
            <person name="Miki Y."/>
            <person name="Yamamoto K."/>
            <person name="Nishito Y."/>
            <person name="Kobayashi T."/>
            <person name="Ikeda K."/>
            <person name="Taguchi R."/>
            <person name="Hara S."/>
            <person name="Ida S."/>
            <person name="Miyamoto Y."/>
            <person name="Watanabe M."/>
            <person name="Baba H."/>
            <person name="Miyata K."/>
            <person name="Oike Y."/>
            <person name="Gelb M.H."/>
            <person name="Murakami M."/>
        </authorList>
    </citation>
    <scope>FUNCTION</scope>
    <scope>DISRUPTION PHENOTYPE</scope>
    <scope>TISSUE SPECIFICITY</scope>
    <scope>INDUCTION BY HIGH-FAT DIET</scope>
</reference>
<reference key="10">
    <citation type="journal article" date="2018" name="Mucosal Immunol.">
        <title>Macrophages regulate lung ILC2 activation via Pla2g5-dependent mechanisms.</title>
        <authorList>
            <person name="Yamaguchi M."/>
            <person name="Samuchiwal S.K."/>
            <person name="Quehenberger O."/>
            <person name="Boyce J.A."/>
            <person name="Balestrieri B."/>
        </authorList>
    </citation>
    <scope>FUNCTION</scope>
    <scope>DISRUPTION PHENOTYPE</scope>
</reference>
<protein>
    <recommendedName>
        <fullName>Phospholipase A2 group V</fullName>
        <ecNumber evidence="8">3.1.1.4</ecNumber>
    </recommendedName>
    <alternativeName>
        <fullName>PLA2-10</fullName>
    </alternativeName>
    <alternativeName>
        <fullName>Phosphatidylcholine 2-acylhydrolase 5</fullName>
    </alternativeName>
</protein>
<feature type="signal peptide" evidence="3">
    <location>
        <begin position="1"/>
        <end position="20"/>
    </location>
</feature>
<feature type="chain" id="PRO_0000022762" description="Phospholipase A2 group V">
    <location>
        <begin position="21"/>
        <end position="137"/>
    </location>
</feature>
<feature type="active site" evidence="1">
    <location>
        <position position="67"/>
    </location>
</feature>
<feature type="active site" evidence="1">
    <location>
        <position position="111"/>
    </location>
</feature>
<feature type="binding site" evidence="1">
    <location>
        <position position="47"/>
    </location>
    <ligand>
        <name>Ca(2+)</name>
        <dbReference type="ChEBI" id="CHEBI:29108"/>
    </ligand>
</feature>
<feature type="binding site" evidence="1">
    <location>
        <position position="49"/>
    </location>
    <ligand>
        <name>Ca(2+)</name>
        <dbReference type="ChEBI" id="CHEBI:29108"/>
    </ligand>
</feature>
<feature type="binding site" evidence="1">
    <location>
        <position position="51"/>
    </location>
    <ligand>
        <name>Ca(2+)</name>
        <dbReference type="ChEBI" id="CHEBI:29108"/>
    </ligand>
</feature>
<feature type="binding site" evidence="1">
    <location>
        <position position="68"/>
    </location>
    <ligand>
        <name>Ca(2+)</name>
        <dbReference type="ChEBI" id="CHEBI:29108"/>
    </ligand>
</feature>
<feature type="disulfide bond" evidence="1">
    <location>
        <begin position="46"/>
        <end position="137"/>
    </location>
</feature>
<feature type="disulfide bond" evidence="1">
    <location>
        <begin position="48"/>
        <end position="64"/>
    </location>
</feature>
<feature type="disulfide bond" evidence="1">
    <location>
        <begin position="63"/>
        <end position="117"/>
    </location>
</feature>
<feature type="disulfide bond" evidence="1">
    <location>
        <begin position="70"/>
        <end position="110"/>
    </location>
</feature>
<feature type="disulfide bond" evidence="1">
    <location>
        <begin position="79"/>
        <end position="103"/>
    </location>
</feature>
<feature type="disulfide bond" evidence="1">
    <location>
        <begin position="97"/>
        <end position="108"/>
    </location>
</feature>
<feature type="mutagenesis site" description="Impairs cysteinyl leukotrienes synthesis and phagocytosis of IgG immune complexes by synovial fluid monocyte/macrophage cells." evidence="11">
    <original>H</original>
    <variation>Q</variation>
    <location>
        <position position="67"/>
    </location>
</feature>
<feature type="sequence conflict" description="In Ref. 1; AAC53038." evidence="15" ref="1">
    <original>G</original>
    <variation>R</variation>
    <location>
        <position position="34"/>
    </location>
</feature>
<proteinExistence type="evidence at protein level"/>